<proteinExistence type="inferred from homology"/>
<name>OBG_ONYPE</name>
<sequence length="422" mass="46507">MFSLHFVDEAFNEVFAGNGGHGIVAFRREKYVAFGGPAGGNGGKGGSVIFVGDKDETTLLKLKYQKHLKAPHGINGKNKGQNGANAPHLYVKVPLGTVFYTADNKFLGEILYDQQTLVIAKGGKGGKGNKALATFKNQAPSYAEKGDLGESFKIKTELKVLADIGLLGFPSVGKSSLISAISKAQPKVASYPFTTIKPHLGVVEVDGFSFVVADLPGLIANAHLGCGMGIQFLKHIERCRVLVHILSMESANPYQDFQTLNQELSQYNPQLLLKKQIIVTNKMDLPDALQKLTLLKQQIKDQPIIPLSLVSFDNLETLKYEMSSLLQNTPLEVAPNKNNDFKLYTLPDNQNTISVIKESDSVFVVSGKQVETFFHRTDFNNEEAVKRFNRILKKIGMEEQLQKQGAKPGDQVKICDRLFYFL</sequence>
<keyword id="KW-0963">Cytoplasm</keyword>
<keyword id="KW-0342">GTP-binding</keyword>
<keyword id="KW-0378">Hydrolase</keyword>
<keyword id="KW-0460">Magnesium</keyword>
<keyword id="KW-0479">Metal-binding</keyword>
<keyword id="KW-0547">Nucleotide-binding</keyword>
<organism>
    <name type="scientific">Onion yellows phytoplasma (strain OY-M)</name>
    <dbReference type="NCBI Taxonomy" id="262768"/>
    <lineage>
        <taxon>Bacteria</taxon>
        <taxon>Bacillati</taxon>
        <taxon>Mycoplasmatota</taxon>
        <taxon>Mollicutes</taxon>
        <taxon>Acholeplasmatales</taxon>
        <taxon>Acholeplasmataceae</taxon>
        <taxon>Candidatus Phytoplasma</taxon>
        <taxon>16SrI (Aster yellows group)</taxon>
    </lineage>
</organism>
<protein>
    <recommendedName>
        <fullName evidence="1">GTPase Obg</fullName>
        <ecNumber evidence="1">3.6.5.-</ecNumber>
    </recommendedName>
    <alternativeName>
        <fullName evidence="1">GTP-binding protein Obg</fullName>
    </alternativeName>
</protein>
<reference key="1">
    <citation type="journal article" date="2004" name="Nat. Genet.">
        <title>Reductive evolution suggested from the complete genome sequence of a plant-pathogenic phytoplasma.</title>
        <authorList>
            <person name="Oshima K."/>
            <person name="Kakizawa S."/>
            <person name="Nishigawa H."/>
            <person name="Jung H.-Y."/>
            <person name="Wei W."/>
            <person name="Suzuki S."/>
            <person name="Arashida R."/>
            <person name="Nakata D."/>
            <person name="Miyata S."/>
            <person name="Ugaki M."/>
            <person name="Namba S."/>
        </authorList>
    </citation>
    <scope>NUCLEOTIDE SEQUENCE [LARGE SCALE GENOMIC DNA]</scope>
    <source>
        <strain>OY-M</strain>
    </source>
</reference>
<comment type="function">
    <text evidence="1">An essential GTPase which binds GTP, GDP and possibly (p)ppGpp with moderate affinity, with high nucleotide exchange rates and a fairly low GTP hydrolysis rate. Plays a role in control of the cell cycle, stress response, ribosome biogenesis and in those bacteria that undergo differentiation, in morphogenesis control.</text>
</comment>
<comment type="cofactor">
    <cofactor evidence="1">
        <name>Mg(2+)</name>
        <dbReference type="ChEBI" id="CHEBI:18420"/>
    </cofactor>
</comment>
<comment type="subunit">
    <text evidence="1">Monomer.</text>
</comment>
<comment type="subcellular location">
    <subcellularLocation>
        <location evidence="1">Cytoplasm</location>
    </subcellularLocation>
</comment>
<comment type="similarity">
    <text evidence="1">Belongs to the TRAFAC class OBG-HflX-like GTPase superfamily. OBG GTPase family.</text>
</comment>
<gene>
    <name evidence="1" type="primary">obg</name>
    <name type="ordered locus">PAM_089</name>
</gene>
<dbReference type="EC" id="3.6.5.-" evidence="1"/>
<dbReference type="EMBL" id="AP006628">
    <property type="protein sequence ID" value="BAD04174.1"/>
    <property type="molecule type" value="Genomic_DNA"/>
</dbReference>
<dbReference type="SMR" id="Q6YRC6"/>
<dbReference type="STRING" id="262768.PAM_089"/>
<dbReference type="KEGG" id="poy:PAM_089"/>
<dbReference type="eggNOG" id="COG0536">
    <property type="taxonomic scope" value="Bacteria"/>
</dbReference>
<dbReference type="HOGENOM" id="CLU_011747_2_1_14"/>
<dbReference type="BioCyc" id="OYEL262768:G1G26-118-MONOMER"/>
<dbReference type="Proteomes" id="UP000002523">
    <property type="component" value="Chromosome"/>
</dbReference>
<dbReference type="GO" id="GO:0005737">
    <property type="term" value="C:cytoplasm"/>
    <property type="evidence" value="ECO:0007669"/>
    <property type="project" value="UniProtKB-SubCell"/>
</dbReference>
<dbReference type="GO" id="GO:0005525">
    <property type="term" value="F:GTP binding"/>
    <property type="evidence" value="ECO:0007669"/>
    <property type="project" value="UniProtKB-UniRule"/>
</dbReference>
<dbReference type="GO" id="GO:0003924">
    <property type="term" value="F:GTPase activity"/>
    <property type="evidence" value="ECO:0007669"/>
    <property type="project" value="UniProtKB-UniRule"/>
</dbReference>
<dbReference type="GO" id="GO:0000287">
    <property type="term" value="F:magnesium ion binding"/>
    <property type="evidence" value="ECO:0007669"/>
    <property type="project" value="InterPro"/>
</dbReference>
<dbReference type="GO" id="GO:0042254">
    <property type="term" value="P:ribosome biogenesis"/>
    <property type="evidence" value="ECO:0007669"/>
    <property type="project" value="UniProtKB-UniRule"/>
</dbReference>
<dbReference type="CDD" id="cd01898">
    <property type="entry name" value="Obg"/>
    <property type="match status" value="1"/>
</dbReference>
<dbReference type="FunFam" id="2.70.210.12:FF:000001">
    <property type="entry name" value="GTPase Obg"/>
    <property type="match status" value="1"/>
</dbReference>
<dbReference type="Gene3D" id="3.30.300.350">
    <property type="entry name" value="GTP-binding protein OBG, C-terminal domain"/>
    <property type="match status" value="1"/>
</dbReference>
<dbReference type="Gene3D" id="2.70.210.12">
    <property type="entry name" value="GTP1/OBG domain"/>
    <property type="match status" value="1"/>
</dbReference>
<dbReference type="Gene3D" id="3.40.50.300">
    <property type="entry name" value="P-loop containing nucleotide triphosphate hydrolases"/>
    <property type="match status" value="1"/>
</dbReference>
<dbReference type="HAMAP" id="MF_01454">
    <property type="entry name" value="GTPase_Obg"/>
    <property type="match status" value="1"/>
</dbReference>
<dbReference type="InterPro" id="IPR031167">
    <property type="entry name" value="G_OBG"/>
</dbReference>
<dbReference type="InterPro" id="IPR006073">
    <property type="entry name" value="GTP-bd"/>
</dbReference>
<dbReference type="InterPro" id="IPR014100">
    <property type="entry name" value="GTP-bd_Obg/CgtA"/>
</dbReference>
<dbReference type="InterPro" id="IPR036346">
    <property type="entry name" value="GTP-bd_prot_GTP1/OBG_C_sf"/>
</dbReference>
<dbReference type="InterPro" id="IPR006169">
    <property type="entry name" value="GTP1_OBG_dom"/>
</dbReference>
<dbReference type="InterPro" id="IPR036726">
    <property type="entry name" value="GTP1_OBG_dom_sf"/>
</dbReference>
<dbReference type="InterPro" id="IPR045086">
    <property type="entry name" value="OBG_GTPase"/>
</dbReference>
<dbReference type="InterPro" id="IPR015349">
    <property type="entry name" value="OCT_dom"/>
</dbReference>
<dbReference type="InterPro" id="IPR027417">
    <property type="entry name" value="P-loop_NTPase"/>
</dbReference>
<dbReference type="InterPro" id="IPR005225">
    <property type="entry name" value="Small_GTP-bd"/>
</dbReference>
<dbReference type="NCBIfam" id="TIGR02729">
    <property type="entry name" value="Obg_CgtA"/>
    <property type="match status" value="1"/>
</dbReference>
<dbReference type="NCBIfam" id="TIGR03595">
    <property type="entry name" value="Obg_CgtA_exten"/>
    <property type="match status" value="1"/>
</dbReference>
<dbReference type="NCBIfam" id="NF008954">
    <property type="entry name" value="PRK12296.1"/>
    <property type="match status" value="1"/>
</dbReference>
<dbReference type="NCBIfam" id="NF008955">
    <property type="entry name" value="PRK12297.1"/>
    <property type="match status" value="1"/>
</dbReference>
<dbReference type="NCBIfam" id="NF008956">
    <property type="entry name" value="PRK12299.1"/>
    <property type="match status" value="1"/>
</dbReference>
<dbReference type="NCBIfam" id="TIGR00231">
    <property type="entry name" value="small_GTP"/>
    <property type="match status" value="1"/>
</dbReference>
<dbReference type="PANTHER" id="PTHR11702">
    <property type="entry name" value="DEVELOPMENTALLY REGULATED GTP-BINDING PROTEIN-RELATED"/>
    <property type="match status" value="1"/>
</dbReference>
<dbReference type="PANTHER" id="PTHR11702:SF31">
    <property type="entry name" value="MITOCHONDRIAL RIBOSOME-ASSOCIATED GTPASE 2"/>
    <property type="match status" value="1"/>
</dbReference>
<dbReference type="Pfam" id="PF09269">
    <property type="entry name" value="DUF1967"/>
    <property type="match status" value="1"/>
</dbReference>
<dbReference type="Pfam" id="PF01018">
    <property type="entry name" value="GTP1_OBG"/>
    <property type="match status" value="1"/>
</dbReference>
<dbReference type="Pfam" id="PF01926">
    <property type="entry name" value="MMR_HSR1"/>
    <property type="match status" value="1"/>
</dbReference>
<dbReference type="PIRSF" id="PIRSF002401">
    <property type="entry name" value="GTP_bd_Obg/CgtA"/>
    <property type="match status" value="1"/>
</dbReference>
<dbReference type="PRINTS" id="PR00326">
    <property type="entry name" value="GTP1OBG"/>
</dbReference>
<dbReference type="SUPFAM" id="SSF102741">
    <property type="entry name" value="Obg GTP-binding protein C-terminal domain"/>
    <property type="match status" value="1"/>
</dbReference>
<dbReference type="SUPFAM" id="SSF82051">
    <property type="entry name" value="Obg GTP-binding protein N-terminal domain"/>
    <property type="match status" value="1"/>
</dbReference>
<dbReference type="SUPFAM" id="SSF52540">
    <property type="entry name" value="P-loop containing nucleoside triphosphate hydrolases"/>
    <property type="match status" value="1"/>
</dbReference>
<dbReference type="PROSITE" id="PS51710">
    <property type="entry name" value="G_OBG"/>
    <property type="match status" value="1"/>
</dbReference>
<dbReference type="PROSITE" id="PS51883">
    <property type="entry name" value="OBG"/>
    <property type="match status" value="1"/>
</dbReference>
<dbReference type="PROSITE" id="PS51881">
    <property type="entry name" value="OCT"/>
    <property type="match status" value="1"/>
</dbReference>
<feature type="chain" id="PRO_0000386103" description="GTPase Obg">
    <location>
        <begin position="1"/>
        <end position="422"/>
    </location>
</feature>
<feature type="domain" description="Obg" evidence="3">
    <location>
        <begin position="4"/>
        <end position="161"/>
    </location>
</feature>
<feature type="domain" description="OBG-type G" evidence="1">
    <location>
        <begin position="162"/>
        <end position="327"/>
    </location>
</feature>
<feature type="domain" description="OCT" evidence="2">
    <location>
        <begin position="345"/>
        <end position="422"/>
    </location>
</feature>
<feature type="binding site" evidence="1">
    <location>
        <begin position="168"/>
        <end position="175"/>
    </location>
    <ligand>
        <name>GTP</name>
        <dbReference type="ChEBI" id="CHEBI:37565"/>
    </ligand>
</feature>
<feature type="binding site" evidence="1">
    <location>
        <position position="175"/>
    </location>
    <ligand>
        <name>Mg(2+)</name>
        <dbReference type="ChEBI" id="CHEBI:18420"/>
    </ligand>
</feature>
<feature type="binding site" evidence="1">
    <location>
        <begin position="193"/>
        <end position="197"/>
    </location>
    <ligand>
        <name>GTP</name>
        <dbReference type="ChEBI" id="CHEBI:37565"/>
    </ligand>
</feature>
<feature type="binding site" evidence="1">
    <location>
        <position position="195"/>
    </location>
    <ligand>
        <name>Mg(2+)</name>
        <dbReference type="ChEBI" id="CHEBI:18420"/>
    </ligand>
</feature>
<feature type="binding site" evidence="1">
    <location>
        <begin position="214"/>
        <end position="217"/>
    </location>
    <ligand>
        <name>GTP</name>
        <dbReference type="ChEBI" id="CHEBI:37565"/>
    </ligand>
</feature>
<feature type="binding site" evidence="1">
    <location>
        <begin position="281"/>
        <end position="284"/>
    </location>
    <ligand>
        <name>GTP</name>
        <dbReference type="ChEBI" id="CHEBI:37565"/>
    </ligand>
</feature>
<feature type="binding site" evidence="1">
    <location>
        <begin position="308"/>
        <end position="310"/>
    </location>
    <ligand>
        <name>GTP</name>
        <dbReference type="ChEBI" id="CHEBI:37565"/>
    </ligand>
</feature>
<evidence type="ECO:0000255" key="1">
    <source>
        <dbReference type="HAMAP-Rule" id="MF_01454"/>
    </source>
</evidence>
<evidence type="ECO:0000255" key="2">
    <source>
        <dbReference type="PROSITE-ProRule" id="PRU01229"/>
    </source>
</evidence>
<evidence type="ECO:0000255" key="3">
    <source>
        <dbReference type="PROSITE-ProRule" id="PRU01231"/>
    </source>
</evidence>
<accession>Q6YRC6</accession>